<proteinExistence type="inferred from homology"/>
<organism>
    <name type="scientific">Clostridium kluyveri (strain NBRC 12016)</name>
    <dbReference type="NCBI Taxonomy" id="583346"/>
    <lineage>
        <taxon>Bacteria</taxon>
        <taxon>Bacillati</taxon>
        <taxon>Bacillota</taxon>
        <taxon>Clostridia</taxon>
        <taxon>Eubacteriales</taxon>
        <taxon>Clostridiaceae</taxon>
        <taxon>Clostridium</taxon>
    </lineage>
</organism>
<feature type="chain" id="PRO_1000189624" description="Probable 2-phosphosulfolactate phosphatase">
    <location>
        <begin position="1"/>
        <end position="240"/>
    </location>
</feature>
<comment type="catalytic activity">
    <reaction evidence="1">
        <text>(2R)-O-phospho-3-sulfolactate + H2O = (2R)-3-sulfolactate + phosphate</text>
        <dbReference type="Rhea" id="RHEA:23416"/>
        <dbReference type="ChEBI" id="CHEBI:15377"/>
        <dbReference type="ChEBI" id="CHEBI:15597"/>
        <dbReference type="ChEBI" id="CHEBI:43474"/>
        <dbReference type="ChEBI" id="CHEBI:58738"/>
        <dbReference type="EC" id="3.1.3.71"/>
    </reaction>
</comment>
<comment type="cofactor">
    <cofactor evidence="1">
        <name>Mg(2+)</name>
        <dbReference type="ChEBI" id="CHEBI:18420"/>
    </cofactor>
</comment>
<comment type="similarity">
    <text evidence="1">Belongs to the ComB family.</text>
</comment>
<reference key="1">
    <citation type="submission" date="2005-09" db="EMBL/GenBank/DDBJ databases">
        <title>Complete genome sequence of Clostridium kluyveri and comparative genomics of Clostridia species.</title>
        <authorList>
            <person name="Inui M."/>
            <person name="Nonaka H."/>
            <person name="Shinoda Y."/>
            <person name="Ikenaga Y."/>
            <person name="Abe M."/>
            <person name="Naito K."/>
            <person name="Vertes A.A."/>
            <person name="Yukawa H."/>
        </authorList>
    </citation>
    <scope>NUCLEOTIDE SEQUENCE [LARGE SCALE GENOMIC DNA]</scope>
    <source>
        <strain>NBRC 12016</strain>
    </source>
</reference>
<sequence length="240" mass="27104">MKIDIIISADDIKKEKILHKSVIVVDMLRATSVIITAINNGCREVIPVLTIEEALEIYHKNREKYVMGGERKALKIEGFHCSNSPLEYSRQVVENKTLVITTSNGTKAIKGSIMAKNILIGALINADEVANRSINLNNDVVIVNAGTCGQFSIDDFICSGYMINCVIKKIKVDLTDIARTALYIYEQNPDIITFIKKASHYKRIKKLKLYDDLEYCCRKDIIKIVPEYIDGIIKCNKLIY</sequence>
<evidence type="ECO:0000255" key="1">
    <source>
        <dbReference type="HAMAP-Rule" id="MF_00490"/>
    </source>
</evidence>
<name>COMB_CLOK1</name>
<gene>
    <name evidence="1" type="primary">comB</name>
    <name type="ordered locus">CKR_0113</name>
</gene>
<accession>B9DY39</accession>
<dbReference type="EC" id="3.1.3.71" evidence="1"/>
<dbReference type="EMBL" id="AP009049">
    <property type="protein sequence ID" value="BAH05164.1"/>
    <property type="molecule type" value="Genomic_DNA"/>
</dbReference>
<dbReference type="RefSeq" id="WP_011988734.1">
    <property type="nucleotide sequence ID" value="NC_011837.1"/>
</dbReference>
<dbReference type="SMR" id="B9DY39"/>
<dbReference type="KEGG" id="ckr:CKR_0113"/>
<dbReference type="HOGENOM" id="CLU_070028_0_0_9"/>
<dbReference type="Proteomes" id="UP000007969">
    <property type="component" value="Chromosome"/>
</dbReference>
<dbReference type="GO" id="GO:0050532">
    <property type="term" value="F:2-phosphosulfolactate phosphatase activity"/>
    <property type="evidence" value="ECO:0007669"/>
    <property type="project" value="UniProtKB-UniRule"/>
</dbReference>
<dbReference type="GO" id="GO:0000287">
    <property type="term" value="F:magnesium ion binding"/>
    <property type="evidence" value="ECO:0007669"/>
    <property type="project" value="UniProtKB-UniRule"/>
</dbReference>
<dbReference type="GO" id="GO:0050545">
    <property type="term" value="F:sulfopyruvate decarboxylase activity"/>
    <property type="evidence" value="ECO:0007669"/>
    <property type="project" value="TreeGrafter"/>
</dbReference>
<dbReference type="FunFam" id="3.90.1560.10:FF:000001">
    <property type="entry name" value="Probable 2-phosphosulfolactate phosphatase"/>
    <property type="match status" value="1"/>
</dbReference>
<dbReference type="Gene3D" id="3.90.1560.10">
    <property type="entry name" value="ComB-like"/>
    <property type="match status" value="1"/>
</dbReference>
<dbReference type="HAMAP" id="MF_00490">
    <property type="entry name" value="ComB"/>
    <property type="match status" value="1"/>
</dbReference>
<dbReference type="InterPro" id="IPR005238">
    <property type="entry name" value="ComB-like"/>
</dbReference>
<dbReference type="InterPro" id="IPR036702">
    <property type="entry name" value="ComB-like_sf"/>
</dbReference>
<dbReference type="NCBIfam" id="NF002055">
    <property type="entry name" value="PRK00886.1-4"/>
    <property type="match status" value="1"/>
</dbReference>
<dbReference type="PANTHER" id="PTHR37311">
    <property type="entry name" value="2-PHOSPHOSULFOLACTATE PHOSPHATASE-RELATED"/>
    <property type="match status" value="1"/>
</dbReference>
<dbReference type="PANTHER" id="PTHR37311:SF1">
    <property type="entry name" value="2-PHOSPHOSULFOLACTATE PHOSPHATASE-RELATED"/>
    <property type="match status" value="1"/>
</dbReference>
<dbReference type="Pfam" id="PF04029">
    <property type="entry name" value="2-ph_phosp"/>
    <property type="match status" value="1"/>
</dbReference>
<dbReference type="SUPFAM" id="SSF142823">
    <property type="entry name" value="ComB-like"/>
    <property type="match status" value="1"/>
</dbReference>
<protein>
    <recommendedName>
        <fullName evidence="1">Probable 2-phosphosulfolactate phosphatase</fullName>
        <ecNumber evidence="1">3.1.3.71</ecNumber>
    </recommendedName>
</protein>
<keyword id="KW-0378">Hydrolase</keyword>
<keyword id="KW-0460">Magnesium</keyword>